<feature type="chain" id="PRO_0000327998" description="Phosphoribosylglycinamide formyltransferase">
    <location>
        <begin position="1"/>
        <end position="206"/>
    </location>
</feature>
<feature type="active site" description="Proton donor" evidence="1">
    <location>
        <position position="123"/>
    </location>
</feature>
<feature type="binding site" evidence="1">
    <location>
        <begin position="13"/>
        <end position="15"/>
    </location>
    <ligand>
        <name>N(1)-(5-phospho-beta-D-ribosyl)glycinamide</name>
        <dbReference type="ChEBI" id="CHEBI:143788"/>
    </ligand>
</feature>
<feature type="binding site" evidence="1">
    <location>
        <begin position="99"/>
        <end position="102"/>
    </location>
    <ligand>
        <name>(6R)-10-formyltetrahydrofolate</name>
        <dbReference type="ChEBI" id="CHEBI:195366"/>
    </ligand>
</feature>
<feature type="binding site" evidence="1">
    <location>
        <position position="121"/>
    </location>
    <ligand>
        <name>(6R)-10-formyltetrahydrofolate</name>
        <dbReference type="ChEBI" id="CHEBI:195366"/>
    </ligand>
</feature>
<feature type="binding site" evidence="1">
    <location>
        <position position="163"/>
    </location>
    <ligand>
        <name>(6R)-10-formyltetrahydrofolate</name>
        <dbReference type="ChEBI" id="CHEBI:195366"/>
    </ligand>
</feature>
<feature type="binding site" evidence="1">
    <location>
        <position position="192"/>
    </location>
    <ligand>
        <name>N(1)-(5-phospho-beta-D-ribosyl)glycinamide</name>
        <dbReference type="ChEBI" id="CHEBI:143788"/>
    </ligand>
</feature>
<feature type="site" description="Raises pKa of active site His" evidence="1">
    <location>
        <position position="163"/>
    </location>
</feature>
<evidence type="ECO:0000250" key="1"/>
<evidence type="ECO:0000305" key="2"/>
<proteinExistence type="inferred from homology"/>
<gene>
    <name type="primary">purN</name>
    <name type="ORF">DDB_G0288985</name>
</gene>
<sequence length="206" mass="23233">MTFNICVLISGNGTNLQAIIDAIESKYLNVCIKVVISNKETAYGLERAKKASIETRVFSLQKYLKQDPINNTRSTYGLELAKIIREYSSIDLIVLAGWMIILPATFLKEFTDNKPTIDIINLHPALPGQYPGAHAIERAFNDFKENKIKHSGIMIHKVIEEVDAGEVILTKEIPILPTDTLESLEERFHQQEHKSLVESIKLLSTK</sequence>
<protein>
    <recommendedName>
        <fullName>Phosphoribosylglycinamide formyltransferase</fullName>
        <ecNumber>2.1.2.2</ecNumber>
    </recommendedName>
    <alternativeName>
        <fullName>5'-phosphoribosylglycinamide transformylase</fullName>
    </alternativeName>
    <alternativeName>
        <fullName>GAR transformylase</fullName>
        <shortName>GART</shortName>
    </alternativeName>
</protein>
<keyword id="KW-0658">Purine biosynthesis</keyword>
<keyword id="KW-1185">Reference proteome</keyword>
<keyword id="KW-0808">Transferase</keyword>
<comment type="catalytic activity">
    <reaction>
        <text>N(1)-(5-phospho-beta-D-ribosyl)glycinamide + (6R)-10-formyltetrahydrofolate = N(2)-formyl-N(1)-(5-phospho-beta-D-ribosyl)glycinamide + (6S)-5,6,7,8-tetrahydrofolate + H(+)</text>
        <dbReference type="Rhea" id="RHEA:15053"/>
        <dbReference type="ChEBI" id="CHEBI:15378"/>
        <dbReference type="ChEBI" id="CHEBI:57453"/>
        <dbReference type="ChEBI" id="CHEBI:143788"/>
        <dbReference type="ChEBI" id="CHEBI:147286"/>
        <dbReference type="ChEBI" id="CHEBI:195366"/>
        <dbReference type="EC" id="2.1.2.2"/>
    </reaction>
</comment>
<comment type="pathway">
    <text>Purine metabolism; IMP biosynthesis via de novo pathway; N(2)-formyl-N(1)-(5-phospho-D-ribosyl)glycinamide from N(1)-(5-phospho-D-ribosyl)glycinamide (10-formyl THF route): step 1/1.</text>
</comment>
<comment type="similarity">
    <text evidence="2">Belongs to the GART family.</text>
</comment>
<name>PUR3_DICDI</name>
<reference key="1">
    <citation type="journal article" date="2005" name="Nature">
        <title>The genome of the social amoeba Dictyostelium discoideum.</title>
        <authorList>
            <person name="Eichinger L."/>
            <person name="Pachebat J.A."/>
            <person name="Gloeckner G."/>
            <person name="Rajandream M.A."/>
            <person name="Sucgang R."/>
            <person name="Berriman M."/>
            <person name="Song J."/>
            <person name="Olsen R."/>
            <person name="Szafranski K."/>
            <person name="Xu Q."/>
            <person name="Tunggal B."/>
            <person name="Kummerfeld S."/>
            <person name="Madera M."/>
            <person name="Konfortov B.A."/>
            <person name="Rivero F."/>
            <person name="Bankier A.T."/>
            <person name="Lehmann R."/>
            <person name="Hamlin N."/>
            <person name="Davies R."/>
            <person name="Gaudet P."/>
            <person name="Fey P."/>
            <person name="Pilcher K."/>
            <person name="Chen G."/>
            <person name="Saunders D."/>
            <person name="Sodergren E.J."/>
            <person name="Davis P."/>
            <person name="Kerhornou A."/>
            <person name="Nie X."/>
            <person name="Hall N."/>
            <person name="Anjard C."/>
            <person name="Hemphill L."/>
            <person name="Bason N."/>
            <person name="Farbrother P."/>
            <person name="Desany B."/>
            <person name="Just E."/>
            <person name="Morio T."/>
            <person name="Rost R."/>
            <person name="Churcher C.M."/>
            <person name="Cooper J."/>
            <person name="Haydock S."/>
            <person name="van Driessche N."/>
            <person name="Cronin A."/>
            <person name="Goodhead I."/>
            <person name="Muzny D.M."/>
            <person name="Mourier T."/>
            <person name="Pain A."/>
            <person name="Lu M."/>
            <person name="Harper D."/>
            <person name="Lindsay R."/>
            <person name="Hauser H."/>
            <person name="James K.D."/>
            <person name="Quiles M."/>
            <person name="Madan Babu M."/>
            <person name="Saito T."/>
            <person name="Buchrieser C."/>
            <person name="Wardroper A."/>
            <person name="Felder M."/>
            <person name="Thangavelu M."/>
            <person name="Johnson D."/>
            <person name="Knights A."/>
            <person name="Loulseged H."/>
            <person name="Mungall K.L."/>
            <person name="Oliver K."/>
            <person name="Price C."/>
            <person name="Quail M.A."/>
            <person name="Urushihara H."/>
            <person name="Hernandez J."/>
            <person name="Rabbinowitsch E."/>
            <person name="Steffen D."/>
            <person name="Sanders M."/>
            <person name="Ma J."/>
            <person name="Kohara Y."/>
            <person name="Sharp S."/>
            <person name="Simmonds M.N."/>
            <person name="Spiegler S."/>
            <person name="Tivey A."/>
            <person name="Sugano S."/>
            <person name="White B."/>
            <person name="Walker D."/>
            <person name="Woodward J.R."/>
            <person name="Winckler T."/>
            <person name="Tanaka Y."/>
            <person name="Shaulsky G."/>
            <person name="Schleicher M."/>
            <person name="Weinstock G.M."/>
            <person name="Rosenthal A."/>
            <person name="Cox E.C."/>
            <person name="Chisholm R.L."/>
            <person name="Gibbs R.A."/>
            <person name="Loomis W.F."/>
            <person name="Platzer M."/>
            <person name="Kay R.R."/>
            <person name="Williams J.G."/>
            <person name="Dear P.H."/>
            <person name="Noegel A.A."/>
            <person name="Barrell B.G."/>
            <person name="Kuspa A."/>
        </authorList>
    </citation>
    <scope>NUCLEOTIDE SEQUENCE [LARGE SCALE GENOMIC DNA]</scope>
    <source>
        <strain>AX4</strain>
    </source>
</reference>
<organism>
    <name type="scientific">Dictyostelium discoideum</name>
    <name type="common">Social amoeba</name>
    <dbReference type="NCBI Taxonomy" id="44689"/>
    <lineage>
        <taxon>Eukaryota</taxon>
        <taxon>Amoebozoa</taxon>
        <taxon>Evosea</taxon>
        <taxon>Eumycetozoa</taxon>
        <taxon>Dictyostelia</taxon>
        <taxon>Dictyosteliales</taxon>
        <taxon>Dictyosteliaceae</taxon>
        <taxon>Dictyostelium</taxon>
    </lineage>
</organism>
<accession>Q54I60</accession>
<dbReference type="EC" id="2.1.2.2"/>
<dbReference type="EMBL" id="AAFI02000129">
    <property type="protein sequence ID" value="EAL62947.1"/>
    <property type="molecule type" value="Genomic_DNA"/>
</dbReference>
<dbReference type="RefSeq" id="XP_636450.1">
    <property type="nucleotide sequence ID" value="XM_631358.1"/>
</dbReference>
<dbReference type="SMR" id="Q54I60"/>
<dbReference type="FunCoup" id="Q54I60">
    <property type="interactions" value="13"/>
</dbReference>
<dbReference type="STRING" id="44689.Q54I60"/>
<dbReference type="PaxDb" id="44689-DDB0230085"/>
<dbReference type="EnsemblProtists" id="EAL62947">
    <property type="protein sequence ID" value="EAL62947"/>
    <property type="gene ID" value="DDB_G0288985"/>
</dbReference>
<dbReference type="GeneID" id="8626902"/>
<dbReference type="KEGG" id="ddi:DDB_G0288985"/>
<dbReference type="dictyBase" id="DDB_G0288985">
    <property type="gene designation" value="purN"/>
</dbReference>
<dbReference type="VEuPathDB" id="AmoebaDB:DDB_G0288985"/>
<dbReference type="eggNOG" id="KOG3076">
    <property type="taxonomic scope" value="Eukaryota"/>
</dbReference>
<dbReference type="HOGENOM" id="CLU_038395_0_1_1"/>
<dbReference type="InParanoid" id="Q54I60"/>
<dbReference type="OMA" id="HYVDEGM"/>
<dbReference type="PhylomeDB" id="Q54I60"/>
<dbReference type="UniPathway" id="UPA00074">
    <property type="reaction ID" value="UER00126"/>
</dbReference>
<dbReference type="PRO" id="PR:Q54I60"/>
<dbReference type="Proteomes" id="UP000002195">
    <property type="component" value="Chromosome 5"/>
</dbReference>
<dbReference type="GO" id="GO:0005737">
    <property type="term" value="C:cytoplasm"/>
    <property type="evidence" value="ECO:0000318"/>
    <property type="project" value="GO_Central"/>
</dbReference>
<dbReference type="GO" id="GO:0004644">
    <property type="term" value="F:phosphoribosylglycinamide formyltransferase activity"/>
    <property type="evidence" value="ECO:0000250"/>
    <property type="project" value="dictyBase"/>
</dbReference>
<dbReference type="GO" id="GO:0006189">
    <property type="term" value="P:'de novo' IMP biosynthetic process"/>
    <property type="evidence" value="ECO:0000318"/>
    <property type="project" value="GO_Central"/>
</dbReference>
<dbReference type="GO" id="GO:0046084">
    <property type="term" value="P:adenine biosynthetic process"/>
    <property type="evidence" value="ECO:0000250"/>
    <property type="project" value="dictyBase"/>
</dbReference>
<dbReference type="GO" id="GO:0006164">
    <property type="term" value="P:purine nucleotide biosynthetic process"/>
    <property type="evidence" value="ECO:0000250"/>
    <property type="project" value="dictyBase"/>
</dbReference>
<dbReference type="CDD" id="cd08645">
    <property type="entry name" value="FMT_core_GART"/>
    <property type="match status" value="1"/>
</dbReference>
<dbReference type="FunFam" id="3.40.50.170:FF:000009">
    <property type="entry name" value="Phosphoribosylglycinamide formyltransferase (Eurofung)"/>
    <property type="match status" value="1"/>
</dbReference>
<dbReference type="Gene3D" id="3.40.50.170">
    <property type="entry name" value="Formyl transferase, N-terminal domain"/>
    <property type="match status" value="1"/>
</dbReference>
<dbReference type="HAMAP" id="MF_01930">
    <property type="entry name" value="PurN"/>
    <property type="match status" value="1"/>
</dbReference>
<dbReference type="InterPro" id="IPR002376">
    <property type="entry name" value="Formyl_transf_N"/>
</dbReference>
<dbReference type="InterPro" id="IPR036477">
    <property type="entry name" value="Formyl_transf_N_sf"/>
</dbReference>
<dbReference type="InterPro" id="IPR004607">
    <property type="entry name" value="GART"/>
</dbReference>
<dbReference type="InterPro" id="IPR001555">
    <property type="entry name" value="GART_AS"/>
</dbReference>
<dbReference type="NCBIfam" id="TIGR00639">
    <property type="entry name" value="PurN"/>
    <property type="match status" value="1"/>
</dbReference>
<dbReference type="PANTHER" id="PTHR43369">
    <property type="entry name" value="PHOSPHORIBOSYLGLYCINAMIDE FORMYLTRANSFERASE"/>
    <property type="match status" value="1"/>
</dbReference>
<dbReference type="PANTHER" id="PTHR43369:SF2">
    <property type="entry name" value="PHOSPHORIBOSYLGLYCINAMIDE FORMYLTRANSFERASE"/>
    <property type="match status" value="1"/>
</dbReference>
<dbReference type="Pfam" id="PF00551">
    <property type="entry name" value="Formyl_trans_N"/>
    <property type="match status" value="1"/>
</dbReference>
<dbReference type="SUPFAM" id="SSF53328">
    <property type="entry name" value="Formyltransferase"/>
    <property type="match status" value="1"/>
</dbReference>
<dbReference type="PROSITE" id="PS00373">
    <property type="entry name" value="GART"/>
    <property type="match status" value="1"/>
</dbReference>